<sequence length="103" mass="11797">MANQKIRIRLKAYDYALIDRSAQEIVETAKRTGAVVKGPIPLPTKIERFNILRSPHVNKTSREQLEIRTHLRLMDIVDWTDKTTDALMKLDLSAGVDVEIKVQ</sequence>
<dbReference type="EMBL" id="AM421808">
    <property type="protein sequence ID" value="CAM09448.1"/>
    <property type="molecule type" value="Genomic_DNA"/>
</dbReference>
<dbReference type="RefSeq" id="WP_002220160.1">
    <property type="nucleotide sequence ID" value="NC_008767.1"/>
</dbReference>
<dbReference type="SMR" id="A1KRH2"/>
<dbReference type="KEGG" id="nmc:NMC0129"/>
<dbReference type="HOGENOM" id="CLU_122625_1_3_4"/>
<dbReference type="Proteomes" id="UP000002286">
    <property type="component" value="Chromosome"/>
</dbReference>
<dbReference type="GO" id="GO:1990904">
    <property type="term" value="C:ribonucleoprotein complex"/>
    <property type="evidence" value="ECO:0007669"/>
    <property type="project" value="UniProtKB-KW"/>
</dbReference>
<dbReference type="GO" id="GO:0005840">
    <property type="term" value="C:ribosome"/>
    <property type="evidence" value="ECO:0007669"/>
    <property type="project" value="UniProtKB-KW"/>
</dbReference>
<dbReference type="GO" id="GO:0003735">
    <property type="term" value="F:structural constituent of ribosome"/>
    <property type="evidence" value="ECO:0007669"/>
    <property type="project" value="InterPro"/>
</dbReference>
<dbReference type="GO" id="GO:0000049">
    <property type="term" value="F:tRNA binding"/>
    <property type="evidence" value="ECO:0007669"/>
    <property type="project" value="UniProtKB-UniRule"/>
</dbReference>
<dbReference type="GO" id="GO:0006412">
    <property type="term" value="P:translation"/>
    <property type="evidence" value="ECO:0007669"/>
    <property type="project" value="UniProtKB-UniRule"/>
</dbReference>
<dbReference type="FunFam" id="3.30.70.600:FF:000001">
    <property type="entry name" value="30S ribosomal protein S10"/>
    <property type="match status" value="1"/>
</dbReference>
<dbReference type="Gene3D" id="3.30.70.600">
    <property type="entry name" value="Ribosomal protein S10 domain"/>
    <property type="match status" value="1"/>
</dbReference>
<dbReference type="HAMAP" id="MF_00508">
    <property type="entry name" value="Ribosomal_uS10"/>
    <property type="match status" value="1"/>
</dbReference>
<dbReference type="InterPro" id="IPR001848">
    <property type="entry name" value="Ribosomal_uS10"/>
</dbReference>
<dbReference type="InterPro" id="IPR018268">
    <property type="entry name" value="Ribosomal_uS10_CS"/>
</dbReference>
<dbReference type="InterPro" id="IPR027486">
    <property type="entry name" value="Ribosomal_uS10_dom"/>
</dbReference>
<dbReference type="InterPro" id="IPR036838">
    <property type="entry name" value="Ribosomal_uS10_dom_sf"/>
</dbReference>
<dbReference type="NCBIfam" id="NF001861">
    <property type="entry name" value="PRK00596.1"/>
    <property type="match status" value="1"/>
</dbReference>
<dbReference type="NCBIfam" id="TIGR01049">
    <property type="entry name" value="rpsJ_bact"/>
    <property type="match status" value="1"/>
</dbReference>
<dbReference type="PANTHER" id="PTHR11700">
    <property type="entry name" value="30S RIBOSOMAL PROTEIN S10 FAMILY MEMBER"/>
    <property type="match status" value="1"/>
</dbReference>
<dbReference type="Pfam" id="PF00338">
    <property type="entry name" value="Ribosomal_S10"/>
    <property type="match status" value="1"/>
</dbReference>
<dbReference type="PRINTS" id="PR00971">
    <property type="entry name" value="RIBOSOMALS10"/>
</dbReference>
<dbReference type="SMART" id="SM01403">
    <property type="entry name" value="Ribosomal_S10"/>
    <property type="match status" value="1"/>
</dbReference>
<dbReference type="SUPFAM" id="SSF54999">
    <property type="entry name" value="Ribosomal protein S10"/>
    <property type="match status" value="1"/>
</dbReference>
<dbReference type="PROSITE" id="PS00361">
    <property type="entry name" value="RIBOSOMAL_S10"/>
    <property type="match status" value="1"/>
</dbReference>
<name>RS10_NEIMF</name>
<feature type="chain" id="PRO_1000015067" description="Small ribosomal subunit protein uS10">
    <location>
        <begin position="1"/>
        <end position="103"/>
    </location>
</feature>
<protein>
    <recommendedName>
        <fullName evidence="1">Small ribosomal subunit protein uS10</fullName>
    </recommendedName>
    <alternativeName>
        <fullName evidence="2">30S ribosomal protein S10</fullName>
    </alternativeName>
</protein>
<organism>
    <name type="scientific">Neisseria meningitidis serogroup C / serotype 2a (strain ATCC 700532 / DSM 15464 / FAM18)</name>
    <dbReference type="NCBI Taxonomy" id="272831"/>
    <lineage>
        <taxon>Bacteria</taxon>
        <taxon>Pseudomonadati</taxon>
        <taxon>Pseudomonadota</taxon>
        <taxon>Betaproteobacteria</taxon>
        <taxon>Neisseriales</taxon>
        <taxon>Neisseriaceae</taxon>
        <taxon>Neisseria</taxon>
    </lineage>
</organism>
<evidence type="ECO:0000255" key="1">
    <source>
        <dbReference type="HAMAP-Rule" id="MF_00508"/>
    </source>
</evidence>
<evidence type="ECO:0000305" key="2"/>
<keyword id="KW-0687">Ribonucleoprotein</keyword>
<keyword id="KW-0689">Ribosomal protein</keyword>
<gene>
    <name evidence="1" type="primary">rpsJ</name>
    <name type="ordered locus">NMC0129</name>
</gene>
<proteinExistence type="inferred from homology"/>
<comment type="function">
    <text evidence="1">Involved in the binding of tRNA to the ribosomes.</text>
</comment>
<comment type="subunit">
    <text evidence="1">Part of the 30S ribosomal subunit.</text>
</comment>
<comment type="similarity">
    <text evidence="1">Belongs to the universal ribosomal protein uS10 family.</text>
</comment>
<reference key="1">
    <citation type="journal article" date="2007" name="PLoS Genet.">
        <title>Meningococcal genetic variation mechanisms viewed through comparative analysis of serogroup C strain FAM18.</title>
        <authorList>
            <person name="Bentley S.D."/>
            <person name="Vernikos G.S."/>
            <person name="Snyder L.A.S."/>
            <person name="Churcher C."/>
            <person name="Arrowsmith C."/>
            <person name="Chillingworth T."/>
            <person name="Cronin A."/>
            <person name="Davis P.H."/>
            <person name="Holroyd N.E."/>
            <person name="Jagels K."/>
            <person name="Maddison M."/>
            <person name="Moule S."/>
            <person name="Rabbinowitsch E."/>
            <person name="Sharp S."/>
            <person name="Unwin L."/>
            <person name="Whitehead S."/>
            <person name="Quail M.A."/>
            <person name="Achtman M."/>
            <person name="Barrell B.G."/>
            <person name="Saunders N.J."/>
            <person name="Parkhill J."/>
        </authorList>
    </citation>
    <scope>NUCLEOTIDE SEQUENCE [LARGE SCALE GENOMIC DNA]</scope>
    <source>
        <strain>ATCC 700532 / DSM 15464 / FAM18</strain>
    </source>
</reference>
<accession>A1KRH2</accession>